<dbReference type="EC" id="3.1.21.10" evidence="1"/>
<dbReference type="EMBL" id="AE001363">
    <property type="protein sequence ID" value="AAD18760.1"/>
    <property type="molecule type" value="Genomic_DNA"/>
</dbReference>
<dbReference type="EMBL" id="AE002161">
    <property type="protein sequence ID" value="AAF38009.1"/>
    <property type="molecule type" value="Genomic_DNA"/>
</dbReference>
<dbReference type="EMBL" id="BA000008">
    <property type="protein sequence ID" value="BAA98828.1"/>
    <property type="molecule type" value="Genomic_DNA"/>
</dbReference>
<dbReference type="EMBL" id="AE009440">
    <property type="protein sequence ID" value="AAP98576.1"/>
    <property type="molecule type" value="Genomic_DNA"/>
</dbReference>
<dbReference type="PIR" id="A72057">
    <property type="entry name" value="A72057"/>
</dbReference>
<dbReference type="PIR" id="B86568">
    <property type="entry name" value="B86568"/>
</dbReference>
<dbReference type="RefSeq" id="NP_224817.1">
    <property type="nucleotide sequence ID" value="NC_000922.1"/>
</dbReference>
<dbReference type="RefSeq" id="WP_010883259.1">
    <property type="nucleotide sequence ID" value="NZ_LN847257.1"/>
</dbReference>
<dbReference type="SMR" id="Q9Z7T3"/>
<dbReference type="STRING" id="406984.CPK_ORF00021"/>
<dbReference type="GeneID" id="45050670"/>
<dbReference type="KEGG" id="cpa:CP_0126"/>
<dbReference type="KEGG" id="cpj:ruvC"/>
<dbReference type="KEGG" id="cpn:CPn_0621"/>
<dbReference type="KEGG" id="cpt:CpB0647"/>
<dbReference type="PATRIC" id="fig|115713.3.peg.691"/>
<dbReference type="eggNOG" id="COG0817">
    <property type="taxonomic scope" value="Bacteria"/>
</dbReference>
<dbReference type="HOGENOM" id="CLU_091257_3_0_0"/>
<dbReference type="OrthoDB" id="9805499at2"/>
<dbReference type="Proteomes" id="UP000000583">
    <property type="component" value="Chromosome"/>
</dbReference>
<dbReference type="Proteomes" id="UP000000801">
    <property type="component" value="Chromosome"/>
</dbReference>
<dbReference type="GO" id="GO:0005737">
    <property type="term" value="C:cytoplasm"/>
    <property type="evidence" value="ECO:0007669"/>
    <property type="project" value="UniProtKB-SubCell"/>
</dbReference>
<dbReference type="GO" id="GO:0048476">
    <property type="term" value="C:Holliday junction resolvase complex"/>
    <property type="evidence" value="ECO:0007669"/>
    <property type="project" value="UniProtKB-UniRule"/>
</dbReference>
<dbReference type="GO" id="GO:0008821">
    <property type="term" value="F:crossover junction DNA endonuclease activity"/>
    <property type="evidence" value="ECO:0007669"/>
    <property type="project" value="UniProtKB-UniRule"/>
</dbReference>
<dbReference type="GO" id="GO:0003677">
    <property type="term" value="F:DNA binding"/>
    <property type="evidence" value="ECO:0007669"/>
    <property type="project" value="UniProtKB-KW"/>
</dbReference>
<dbReference type="GO" id="GO:0000287">
    <property type="term" value="F:magnesium ion binding"/>
    <property type="evidence" value="ECO:0007669"/>
    <property type="project" value="UniProtKB-UniRule"/>
</dbReference>
<dbReference type="GO" id="GO:0006310">
    <property type="term" value="P:DNA recombination"/>
    <property type="evidence" value="ECO:0007669"/>
    <property type="project" value="UniProtKB-UniRule"/>
</dbReference>
<dbReference type="GO" id="GO:0006281">
    <property type="term" value="P:DNA repair"/>
    <property type="evidence" value="ECO:0007669"/>
    <property type="project" value="UniProtKB-UniRule"/>
</dbReference>
<dbReference type="CDD" id="cd16962">
    <property type="entry name" value="RuvC"/>
    <property type="match status" value="1"/>
</dbReference>
<dbReference type="FunFam" id="3.30.420.10:FF:000002">
    <property type="entry name" value="Crossover junction endodeoxyribonuclease RuvC"/>
    <property type="match status" value="1"/>
</dbReference>
<dbReference type="Gene3D" id="3.30.420.10">
    <property type="entry name" value="Ribonuclease H-like superfamily/Ribonuclease H"/>
    <property type="match status" value="1"/>
</dbReference>
<dbReference type="HAMAP" id="MF_00034">
    <property type="entry name" value="RuvC"/>
    <property type="match status" value="1"/>
</dbReference>
<dbReference type="InterPro" id="IPR012337">
    <property type="entry name" value="RNaseH-like_sf"/>
</dbReference>
<dbReference type="InterPro" id="IPR036397">
    <property type="entry name" value="RNaseH_sf"/>
</dbReference>
<dbReference type="InterPro" id="IPR020563">
    <property type="entry name" value="X-over_junc_endoDNase_Mg_BS"/>
</dbReference>
<dbReference type="InterPro" id="IPR002176">
    <property type="entry name" value="X-over_junc_endoDNase_RuvC"/>
</dbReference>
<dbReference type="NCBIfam" id="TIGR00228">
    <property type="entry name" value="ruvC"/>
    <property type="match status" value="1"/>
</dbReference>
<dbReference type="PANTHER" id="PTHR30194">
    <property type="entry name" value="CROSSOVER JUNCTION ENDODEOXYRIBONUCLEASE RUVC"/>
    <property type="match status" value="1"/>
</dbReference>
<dbReference type="PANTHER" id="PTHR30194:SF3">
    <property type="entry name" value="CROSSOVER JUNCTION ENDODEOXYRIBONUCLEASE RUVC"/>
    <property type="match status" value="1"/>
</dbReference>
<dbReference type="Pfam" id="PF02075">
    <property type="entry name" value="RuvC"/>
    <property type="match status" value="1"/>
</dbReference>
<dbReference type="PRINTS" id="PR00696">
    <property type="entry name" value="RSOLVASERUVC"/>
</dbReference>
<dbReference type="SUPFAM" id="SSF53098">
    <property type="entry name" value="Ribonuclease H-like"/>
    <property type="match status" value="1"/>
</dbReference>
<dbReference type="PROSITE" id="PS01321">
    <property type="entry name" value="RUVC"/>
    <property type="match status" value="1"/>
</dbReference>
<evidence type="ECO:0000255" key="1">
    <source>
        <dbReference type="HAMAP-Rule" id="MF_00034"/>
    </source>
</evidence>
<evidence type="ECO:0000305" key="2"/>
<gene>
    <name evidence="1" type="primary">ruvC</name>
    <name type="ordered locus">CPn_0621</name>
    <name type="ordered locus">CP_0126</name>
    <name type="ordered locus">CpB0647</name>
</gene>
<organism>
    <name type="scientific">Chlamydia pneumoniae</name>
    <name type="common">Chlamydophila pneumoniae</name>
    <dbReference type="NCBI Taxonomy" id="83558"/>
    <lineage>
        <taxon>Bacteria</taxon>
        <taxon>Pseudomonadati</taxon>
        <taxon>Chlamydiota</taxon>
        <taxon>Chlamydiia</taxon>
        <taxon>Chlamydiales</taxon>
        <taxon>Chlamydiaceae</taxon>
        <taxon>Chlamydia/Chlamydophila group</taxon>
        <taxon>Chlamydia</taxon>
    </lineage>
</organism>
<keyword id="KW-0963">Cytoplasm</keyword>
<keyword id="KW-0227">DNA damage</keyword>
<keyword id="KW-0233">DNA recombination</keyword>
<keyword id="KW-0234">DNA repair</keyword>
<keyword id="KW-0238">DNA-binding</keyword>
<keyword id="KW-0255">Endonuclease</keyword>
<keyword id="KW-0378">Hydrolase</keyword>
<keyword id="KW-0460">Magnesium</keyword>
<keyword id="KW-0479">Metal-binding</keyword>
<keyword id="KW-0540">Nuclease</keyword>
<feature type="chain" id="PRO_0000183088" description="Crossover junction endodeoxyribonuclease RuvC">
    <location>
        <begin position="1"/>
        <end position="168"/>
    </location>
</feature>
<feature type="active site" evidence="1">
    <location>
        <position position="9"/>
    </location>
</feature>
<feature type="active site" evidence="1">
    <location>
        <position position="70"/>
    </location>
</feature>
<feature type="active site" evidence="1">
    <location>
        <position position="145"/>
    </location>
</feature>
<feature type="binding site" evidence="1">
    <location>
        <position position="9"/>
    </location>
    <ligand>
        <name>Mg(2+)</name>
        <dbReference type="ChEBI" id="CHEBI:18420"/>
        <label>1</label>
    </ligand>
</feature>
<feature type="binding site" evidence="1">
    <location>
        <position position="70"/>
    </location>
    <ligand>
        <name>Mg(2+)</name>
        <dbReference type="ChEBI" id="CHEBI:18420"/>
        <label>2</label>
    </ligand>
</feature>
<feature type="binding site" evidence="1">
    <location>
        <position position="145"/>
    </location>
    <ligand>
        <name>Mg(2+)</name>
        <dbReference type="ChEBI" id="CHEBI:18420"/>
        <label>1</label>
    </ligand>
</feature>
<accession>Q9Z7T3</accession>
<accession>Q9JQH8</accession>
<name>RUVC_CHLPN</name>
<reference key="1">
    <citation type="journal article" date="1999" name="Nat. Genet.">
        <title>Comparative genomes of Chlamydia pneumoniae and C. trachomatis.</title>
        <authorList>
            <person name="Kalman S."/>
            <person name="Mitchell W.P."/>
            <person name="Marathe R."/>
            <person name="Lammel C.J."/>
            <person name="Fan J."/>
            <person name="Hyman R.W."/>
            <person name="Olinger L."/>
            <person name="Grimwood J."/>
            <person name="Davis R.W."/>
            <person name="Stephens R.S."/>
        </authorList>
    </citation>
    <scope>NUCLEOTIDE SEQUENCE [LARGE SCALE GENOMIC DNA]</scope>
    <source>
        <strain>CWL029</strain>
    </source>
</reference>
<reference key="2">
    <citation type="journal article" date="2000" name="Nucleic Acids Res.">
        <title>Genome sequences of Chlamydia trachomatis MoPn and Chlamydia pneumoniae AR39.</title>
        <authorList>
            <person name="Read T.D."/>
            <person name="Brunham R.C."/>
            <person name="Shen C."/>
            <person name="Gill S.R."/>
            <person name="Heidelberg J.F."/>
            <person name="White O."/>
            <person name="Hickey E.K."/>
            <person name="Peterson J.D."/>
            <person name="Utterback T.R."/>
            <person name="Berry K.J."/>
            <person name="Bass S."/>
            <person name="Linher K.D."/>
            <person name="Weidman J.F."/>
            <person name="Khouri H.M."/>
            <person name="Craven B."/>
            <person name="Bowman C."/>
            <person name="Dodson R.J."/>
            <person name="Gwinn M.L."/>
            <person name="Nelson W.C."/>
            <person name="DeBoy R.T."/>
            <person name="Kolonay J.F."/>
            <person name="McClarty G."/>
            <person name="Salzberg S.L."/>
            <person name="Eisen J.A."/>
            <person name="Fraser C.M."/>
        </authorList>
    </citation>
    <scope>NUCLEOTIDE SEQUENCE [LARGE SCALE GENOMIC DNA]</scope>
    <source>
        <strain>AR39</strain>
    </source>
</reference>
<reference key="3">
    <citation type="journal article" date="2000" name="Nucleic Acids Res.">
        <title>Comparison of whole genome sequences of Chlamydia pneumoniae J138 from Japan and CWL029 from USA.</title>
        <authorList>
            <person name="Shirai M."/>
            <person name="Hirakawa H."/>
            <person name="Kimoto M."/>
            <person name="Tabuchi M."/>
            <person name="Kishi F."/>
            <person name="Ouchi K."/>
            <person name="Shiba T."/>
            <person name="Ishii K."/>
            <person name="Hattori M."/>
            <person name="Kuhara S."/>
            <person name="Nakazawa T."/>
        </authorList>
    </citation>
    <scope>NUCLEOTIDE SEQUENCE [LARGE SCALE GENOMIC DNA]</scope>
    <source>
        <strain>J138</strain>
    </source>
</reference>
<reference key="4">
    <citation type="submission" date="2002-05" db="EMBL/GenBank/DDBJ databases">
        <title>The genome sequence of Chlamydia pneumoniae TW183 and comparison with other Chlamydia strains based on whole genome sequence analysis.</title>
        <authorList>
            <person name="Geng M.M."/>
            <person name="Schuhmacher A."/>
            <person name="Muehldorfer I."/>
            <person name="Bensch K.W."/>
            <person name="Schaefer K.P."/>
            <person name="Schneider S."/>
            <person name="Pohl T."/>
            <person name="Essig A."/>
            <person name="Marre R."/>
            <person name="Melchers K."/>
        </authorList>
    </citation>
    <scope>NUCLEOTIDE SEQUENCE [LARGE SCALE GENOMIC DNA]</scope>
    <source>
        <strain>TW-183</strain>
    </source>
</reference>
<proteinExistence type="inferred from homology"/>
<sequence length="168" mass="18404">MSELIIGVDPGTIVAGYAIIAVEQRYQLRPYSYGAIRLSSDMPLPMRYKTLFEQLSGVLDDTQPNAMVLETQFVNKNPQSTMKLAMARGIVLLAAAQRDILIFEYAPNVAKKAVVGKGHASKRQVQVMVSKILNVPEVLHPSNEDIADAFALAICHTHVARSPLCGVR</sequence>
<comment type="function">
    <text evidence="1">The RuvA-RuvB-RuvC complex processes Holliday junction (HJ) DNA during genetic recombination and DNA repair. Endonuclease that resolves HJ intermediates. Cleaves cruciform DNA by making single-stranded nicks across the HJ at symmetrical positions within the homologous arms, yielding a 5'-phosphate and a 3'-hydroxyl group; requires a central core of homology in the junction. The consensus cleavage sequence is 5'-(A/T)TT(C/G)-3'. Cleavage occurs on the 3'-side of the TT dinucleotide at the point of strand exchange. HJ branch migration catalyzed by RuvA-RuvB allows RuvC to scan DNA until it finds its consensus sequence, where it cleaves and resolves the cruciform DNA.</text>
</comment>
<comment type="catalytic activity">
    <reaction evidence="1">
        <text>Endonucleolytic cleavage at a junction such as a reciprocal single-stranded crossover between two homologous DNA duplexes (Holliday junction).</text>
        <dbReference type="EC" id="3.1.21.10"/>
    </reaction>
</comment>
<comment type="cofactor">
    <cofactor evidence="1">
        <name>Mg(2+)</name>
        <dbReference type="ChEBI" id="CHEBI:18420"/>
    </cofactor>
    <text evidence="1">Binds 2 Mg(2+) ion per subunit.</text>
</comment>
<comment type="subunit">
    <text evidence="1">Homodimer which binds Holliday junction (HJ) DNA. The HJ becomes 2-fold symmetrical on binding to RuvC with unstacked arms; it has a different conformation from HJ DNA in complex with RuvA. In the full resolvosome a probable DNA-RuvA(4)-RuvB(12)-RuvC(2) complex forms which resolves the HJ.</text>
</comment>
<comment type="subcellular location">
    <subcellularLocation>
        <location evidence="1">Cytoplasm</location>
    </subcellularLocation>
</comment>
<comment type="similarity">
    <text evidence="1 2">Belongs to the RuvC family.</text>
</comment>
<protein>
    <recommendedName>
        <fullName evidence="1">Crossover junction endodeoxyribonuclease RuvC</fullName>
        <ecNumber evidence="1">3.1.21.10</ecNumber>
    </recommendedName>
    <alternativeName>
        <fullName evidence="1">Holliday junction nuclease RuvC</fullName>
    </alternativeName>
    <alternativeName>
        <fullName evidence="1">Holliday junction resolvase RuvC</fullName>
    </alternativeName>
</protein>